<dbReference type="EC" id="1.1.1.86" evidence="1"/>
<dbReference type="EMBL" id="CP000554">
    <property type="protein sequence ID" value="ABM78747.1"/>
    <property type="molecule type" value="Genomic_DNA"/>
</dbReference>
<dbReference type="RefSeq" id="WP_011826626.1">
    <property type="nucleotide sequence ID" value="NC_008820.1"/>
</dbReference>
<dbReference type="SMR" id="A2CB87"/>
<dbReference type="STRING" id="59922.P9303_20051"/>
<dbReference type="KEGG" id="pmf:P9303_20051"/>
<dbReference type="HOGENOM" id="CLU_033821_0_1_3"/>
<dbReference type="BioCyc" id="PMAR59922:G1G80-1745-MONOMER"/>
<dbReference type="UniPathway" id="UPA00047">
    <property type="reaction ID" value="UER00056"/>
</dbReference>
<dbReference type="UniPathway" id="UPA00049">
    <property type="reaction ID" value="UER00060"/>
</dbReference>
<dbReference type="Proteomes" id="UP000002274">
    <property type="component" value="Chromosome"/>
</dbReference>
<dbReference type="GO" id="GO:0005829">
    <property type="term" value="C:cytosol"/>
    <property type="evidence" value="ECO:0007669"/>
    <property type="project" value="TreeGrafter"/>
</dbReference>
<dbReference type="GO" id="GO:0004455">
    <property type="term" value="F:ketol-acid reductoisomerase activity"/>
    <property type="evidence" value="ECO:0007669"/>
    <property type="project" value="UniProtKB-UniRule"/>
</dbReference>
<dbReference type="GO" id="GO:0000287">
    <property type="term" value="F:magnesium ion binding"/>
    <property type="evidence" value="ECO:0007669"/>
    <property type="project" value="UniProtKB-UniRule"/>
</dbReference>
<dbReference type="GO" id="GO:0050661">
    <property type="term" value="F:NADP binding"/>
    <property type="evidence" value="ECO:0007669"/>
    <property type="project" value="InterPro"/>
</dbReference>
<dbReference type="GO" id="GO:0009097">
    <property type="term" value="P:isoleucine biosynthetic process"/>
    <property type="evidence" value="ECO:0007669"/>
    <property type="project" value="UniProtKB-UniRule"/>
</dbReference>
<dbReference type="GO" id="GO:0009099">
    <property type="term" value="P:L-valine biosynthetic process"/>
    <property type="evidence" value="ECO:0007669"/>
    <property type="project" value="UniProtKB-UniRule"/>
</dbReference>
<dbReference type="FunFam" id="3.40.50.720:FF:000023">
    <property type="entry name" value="Ketol-acid reductoisomerase (NADP(+))"/>
    <property type="match status" value="1"/>
</dbReference>
<dbReference type="Gene3D" id="6.10.240.10">
    <property type="match status" value="1"/>
</dbReference>
<dbReference type="Gene3D" id="3.40.50.720">
    <property type="entry name" value="NAD(P)-binding Rossmann-like Domain"/>
    <property type="match status" value="1"/>
</dbReference>
<dbReference type="HAMAP" id="MF_00435">
    <property type="entry name" value="IlvC"/>
    <property type="match status" value="1"/>
</dbReference>
<dbReference type="InterPro" id="IPR008927">
    <property type="entry name" value="6-PGluconate_DH-like_C_sf"/>
</dbReference>
<dbReference type="InterPro" id="IPR013023">
    <property type="entry name" value="KARI"/>
</dbReference>
<dbReference type="InterPro" id="IPR000506">
    <property type="entry name" value="KARI_C"/>
</dbReference>
<dbReference type="InterPro" id="IPR013116">
    <property type="entry name" value="KARI_N"/>
</dbReference>
<dbReference type="InterPro" id="IPR014359">
    <property type="entry name" value="KARI_prok"/>
</dbReference>
<dbReference type="InterPro" id="IPR036291">
    <property type="entry name" value="NAD(P)-bd_dom_sf"/>
</dbReference>
<dbReference type="NCBIfam" id="TIGR00465">
    <property type="entry name" value="ilvC"/>
    <property type="match status" value="1"/>
</dbReference>
<dbReference type="NCBIfam" id="NF004017">
    <property type="entry name" value="PRK05479.1"/>
    <property type="match status" value="1"/>
</dbReference>
<dbReference type="NCBIfam" id="NF009940">
    <property type="entry name" value="PRK13403.1"/>
    <property type="match status" value="1"/>
</dbReference>
<dbReference type="PANTHER" id="PTHR21371">
    <property type="entry name" value="KETOL-ACID REDUCTOISOMERASE, MITOCHONDRIAL"/>
    <property type="match status" value="1"/>
</dbReference>
<dbReference type="PANTHER" id="PTHR21371:SF1">
    <property type="entry name" value="KETOL-ACID REDUCTOISOMERASE, MITOCHONDRIAL"/>
    <property type="match status" value="1"/>
</dbReference>
<dbReference type="Pfam" id="PF01450">
    <property type="entry name" value="KARI_C"/>
    <property type="match status" value="1"/>
</dbReference>
<dbReference type="Pfam" id="PF07991">
    <property type="entry name" value="KARI_N"/>
    <property type="match status" value="1"/>
</dbReference>
<dbReference type="PIRSF" id="PIRSF000116">
    <property type="entry name" value="IlvC_gammaproteo"/>
    <property type="match status" value="1"/>
</dbReference>
<dbReference type="SUPFAM" id="SSF48179">
    <property type="entry name" value="6-phosphogluconate dehydrogenase C-terminal domain-like"/>
    <property type="match status" value="1"/>
</dbReference>
<dbReference type="SUPFAM" id="SSF51735">
    <property type="entry name" value="NAD(P)-binding Rossmann-fold domains"/>
    <property type="match status" value="1"/>
</dbReference>
<dbReference type="PROSITE" id="PS51851">
    <property type="entry name" value="KARI_C"/>
    <property type="match status" value="1"/>
</dbReference>
<dbReference type="PROSITE" id="PS51850">
    <property type="entry name" value="KARI_N"/>
    <property type="match status" value="1"/>
</dbReference>
<comment type="function">
    <text evidence="1">Involved in the biosynthesis of branched-chain amino acids (BCAA). Catalyzes an alkyl-migration followed by a ketol-acid reduction of (S)-2-acetolactate (S2AL) to yield (R)-2,3-dihydroxy-isovalerate. In the isomerase reaction, S2AL is rearranged via a Mg-dependent methyl migration to produce 3-hydroxy-3-methyl-2-ketobutyrate (HMKB). In the reductase reaction, this 2-ketoacid undergoes a metal-dependent reduction by NADPH to yield (R)-2,3-dihydroxy-isovalerate.</text>
</comment>
<comment type="catalytic activity">
    <reaction evidence="1">
        <text>(2R)-2,3-dihydroxy-3-methylbutanoate + NADP(+) = (2S)-2-acetolactate + NADPH + H(+)</text>
        <dbReference type="Rhea" id="RHEA:22068"/>
        <dbReference type="ChEBI" id="CHEBI:15378"/>
        <dbReference type="ChEBI" id="CHEBI:49072"/>
        <dbReference type="ChEBI" id="CHEBI:57783"/>
        <dbReference type="ChEBI" id="CHEBI:58349"/>
        <dbReference type="ChEBI" id="CHEBI:58476"/>
        <dbReference type="EC" id="1.1.1.86"/>
    </reaction>
</comment>
<comment type="catalytic activity">
    <reaction evidence="1">
        <text>(2R,3R)-2,3-dihydroxy-3-methylpentanoate + NADP(+) = (S)-2-ethyl-2-hydroxy-3-oxobutanoate + NADPH + H(+)</text>
        <dbReference type="Rhea" id="RHEA:13493"/>
        <dbReference type="ChEBI" id="CHEBI:15378"/>
        <dbReference type="ChEBI" id="CHEBI:49256"/>
        <dbReference type="ChEBI" id="CHEBI:49258"/>
        <dbReference type="ChEBI" id="CHEBI:57783"/>
        <dbReference type="ChEBI" id="CHEBI:58349"/>
        <dbReference type="EC" id="1.1.1.86"/>
    </reaction>
</comment>
<comment type="cofactor">
    <cofactor evidence="1">
        <name>Mg(2+)</name>
        <dbReference type="ChEBI" id="CHEBI:18420"/>
    </cofactor>
    <text evidence="1">Binds 2 magnesium ions per subunit.</text>
</comment>
<comment type="pathway">
    <text evidence="1">Amino-acid biosynthesis; L-isoleucine biosynthesis; L-isoleucine from 2-oxobutanoate: step 2/4.</text>
</comment>
<comment type="pathway">
    <text evidence="1">Amino-acid biosynthesis; L-valine biosynthesis; L-valine from pyruvate: step 2/4.</text>
</comment>
<comment type="similarity">
    <text evidence="1">Belongs to the ketol-acid reductoisomerase family.</text>
</comment>
<proteinExistence type="inferred from homology"/>
<organism>
    <name type="scientific">Prochlorococcus marinus (strain MIT 9303)</name>
    <dbReference type="NCBI Taxonomy" id="59922"/>
    <lineage>
        <taxon>Bacteria</taxon>
        <taxon>Bacillati</taxon>
        <taxon>Cyanobacteriota</taxon>
        <taxon>Cyanophyceae</taxon>
        <taxon>Synechococcales</taxon>
        <taxon>Prochlorococcaceae</taxon>
        <taxon>Prochlorococcus</taxon>
    </lineage>
</organism>
<name>ILVC_PROM3</name>
<protein>
    <recommendedName>
        <fullName evidence="1">Ketol-acid reductoisomerase (NADP(+))</fullName>
        <shortName evidence="1">KARI</shortName>
        <ecNumber evidence="1">1.1.1.86</ecNumber>
    </recommendedName>
    <alternativeName>
        <fullName evidence="1">Acetohydroxy-acid isomeroreductase</fullName>
        <shortName evidence="1">AHIR</shortName>
    </alternativeName>
    <alternativeName>
        <fullName evidence="1">Alpha-keto-beta-hydroxylacyl reductoisomerase</fullName>
    </alternativeName>
    <alternativeName>
        <fullName evidence="1">Ketol-acid reductoisomerase type 1</fullName>
    </alternativeName>
    <alternativeName>
        <fullName evidence="1">Ketol-acid reductoisomerase type I</fullName>
    </alternativeName>
</protein>
<reference key="1">
    <citation type="journal article" date="2007" name="PLoS Genet.">
        <title>Patterns and implications of gene gain and loss in the evolution of Prochlorococcus.</title>
        <authorList>
            <person name="Kettler G.C."/>
            <person name="Martiny A.C."/>
            <person name="Huang K."/>
            <person name="Zucker J."/>
            <person name="Coleman M.L."/>
            <person name="Rodrigue S."/>
            <person name="Chen F."/>
            <person name="Lapidus A."/>
            <person name="Ferriera S."/>
            <person name="Johnson J."/>
            <person name="Steglich C."/>
            <person name="Church G.M."/>
            <person name="Richardson P."/>
            <person name="Chisholm S.W."/>
        </authorList>
    </citation>
    <scope>NUCLEOTIDE SEQUENCE [LARGE SCALE GENOMIC DNA]</scope>
    <source>
        <strain>MIT 9303</strain>
    </source>
</reference>
<sequence length="331" mass="35706">MAQLFYDSDADLSLLNGKTVAIVGYGSQGHAHALNLKDSGVDVVVGLYEGSRSAEKARTDGLEVLSVAEASAKADWIMVLLPDEFQKDVYAKEIAPHLSSGKVLSFAHGFNIRFGLIQPPADVDVVMIAPKGPGHTVRWEYQNGQGVPALFAIEQDASGQARALAMAYAKGIGGTRAGILETNFKEETETDLFGEQAVLCGGLSELVKAGFETLVEAGYQPELAYFECLHEVKLIVDLMVKGGLTAMRDSISNTAEYGDYVSGPRLINADTKAEMKRILADIQDGTFAKNFVAECESGKPEMKKIRDRDAAHPIEQVGKGLRAMFSWLKTA</sequence>
<feature type="chain" id="PRO_1000050555" description="Ketol-acid reductoisomerase (NADP(+))">
    <location>
        <begin position="1"/>
        <end position="331"/>
    </location>
</feature>
<feature type="domain" description="KARI N-terminal Rossmann" evidence="2">
    <location>
        <begin position="2"/>
        <end position="182"/>
    </location>
</feature>
<feature type="domain" description="KARI C-terminal knotted" evidence="3">
    <location>
        <begin position="183"/>
        <end position="328"/>
    </location>
</feature>
<feature type="active site" evidence="1">
    <location>
        <position position="108"/>
    </location>
</feature>
<feature type="binding site" evidence="1">
    <location>
        <begin position="25"/>
        <end position="28"/>
    </location>
    <ligand>
        <name>NADP(+)</name>
        <dbReference type="ChEBI" id="CHEBI:58349"/>
    </ligand>
</feature>
<feature type="binding site" evidence="1">
    <location>
        <position position="51"/>
    </location>
    <ligand>
        <name>NADP(+)</name>
        <dbReference type="ChEBI" id="CHEBI:58349"/>
    </ligand>
</feature>
<feature type="binding site" evidence="1">
    <location>
        <position position="53"/>
    </location>
    <ligand>
        <name>NADP(+)</name>
        <dbReference type="ChEBI" id="CHEBI:58349"/>
    </ligand>
</feature>
<feature type="binding site" evidence="1">
    <location>
        <begin position="83"/>
        <end position="86"/>
    </location>
    <ligand>
        <name>NADP(+)</name>
        <dbReference type="ChEBI" id="CHEBI:58349"/>
    </ligand>
</feature>
<feature type="binding site" evidence="1">
    <location>
        <position position="134"/>
    </location>
    <ligand>
        <name>NADP(+)</name>
        <dbReference type="ChEBI" id="CHEBI:58349"/>
    </ligand>
</feature>
<feature type="binding site" evidence="1">
    <location>
        <position position="191"/>
    </location>
    <ligand>
        <name>Mg(2+)</name>
        <dbReference type="ChEBI" id="CHEBI:18420"/>
        <label>1</label>
    </ligand>
</feature>
<feature type="binding site" evidence="1">
    <location>
        <position position="191"/>
    </location>
    <ligand>
        <name>Mg(2+)</name>
        <dbReference type="ChEBI" id="CHEBI:18420"/>
        <label>2</label>
    </ligand>
</feature>
<feature type="binding site" evidence="1">
    <location>
        <position position="195"/>
    </location>
    <ligand>
        <name>Mg(2+)</name>
        <dbReference type="ChEBI" id="CHEBI:18420"/>
        <label>1</label>
    </ligand>
</feature>
<feature type="binding site" evidence="1">
    <location>
        <position position="227"/>
    </location>
    <ligand>
        <name>Mg(2+)</name>
        <dbReference type="ChEBI" id="CHEBI:18420"/>
        <label>2</label>
    </ligand>
</feature>
<feature type="binding site" evidence="1">
    <location>
        <position position="231"/>
    </location>
    <ligand>
        <name>Mg(2+)</name>
        <dbReference type="ChEBI" id="CHEBI:18420"/>
        <label>2</label>
    </ligand>
</feature>
<feature type="binding site" evidence="1">
    <location>
        <position position="252"/>
    </location>
    <ligand>
        <name>substrate</name>
    </ligand>
</feature>
<gene>
    <name evidence="1" type="primary">ilvC</name>
    <name type="ordered locus">P9303_20051</name>
</gene>
<accession>A2CB87</accession>
<evidence type="ECO:0000255" key="1">
    <source>
        <dbReference type="HAMAP-Rule" id="MF_00435"/>
    </source>
</evidence>
<evidence type="ECO:0000255" key="2">
    <source>
        <dbReference type="PROSITE-ProRule" id="PRU01197"/>
    </source>
</evidence>
<evidence type="ECO:0000255" key="3">
    <source>
        <dbReference type="PROSITE-ProRule" id="PRU01198"/>
    </source>
</evidence>
<keyword id="KW-0028">Amino-acid biosynthesis</keyword>
<keyword id="KW-0100">Branched-chain amino acid biosynthesis</keyword>
<keyword id="KW-0460">Magnesium</keyword>
<keyword id="KW-0479">Metal-binding</keyword>
<keyword id="KW-0521">NADP</keyword>
<keyword id="KW-0560">Oxidoreductase</keyword>